<dbReference type="EMBL" id="M21627">
    <property type="protein sequence ID" value="AAA47912.1"/>
    <property type="status" value="ALT_INIT"/>
    <property type="molecule type" value="Genomic_RNA"/>
</dbReference>
<dbReference type="EMBL" id="X05598">
    <property type="protein sequence ID" value="CAA29091.1"/>
    <property type="molecule type" value="Genomic_RNA"/>
</dbReference>
<dbReference type="EMBL" id="X06371">
    <property type="protein sequence ID" value="CAA29673.1"/>
    <property type="molecule type" value="Genomic_RNA"/>
</dbReference>
<dbReference type="EMBL" id="AJ271965">
    <property type="protein sequence ID" value="CAB91149.2"/>
    <property type="molecule type" value="Genomic_RNA"/>
</dbReference>
<dbReference type="EMBL" id="M14878">
    <property type="protein sequence ID" value="AAA47914.1"/>
    <property type="molecule type" value="Genomic_RNA"/>
</dbReference>
<dbReference type="PIR" id="A26961">
    <property type="entry name" value="VGIHPC"/>
</dbReference>
<dbReference type="PIR" id="A29241">
    <property type="entry name" value="MFIHPC"/>
</dbReference>
<dbReference type="SMR" id="P04135"/>
<dbReference type="IntAct" id="P04135">
    <property type="interactions" value="5"/>
</dbReference>
<dbReference type="GlyCosmos" id="P04135">
    <property type="glycosylation" value="1 site, No reported glycans"/>
</dbReference>
<dbReference type="Proteomes" id="UP000001440">
    <property type="component" value="Segment"/>
</dbReference>
<dbReference type="GO" id="GO:0030430">
    <property type="term" value="C:host cell cytoplasm"/>
    <property type="evidence" value="ECO:0000314"/>
    <property type="project" value="UniProtKB"/>
</dbReference>
<dbReference type="GO" id="GO:0044178">
    <property type="term" value="C:host cell Golgi membrane"/>
    <property type="evidence" value="ECO:0007669"/>
    <property type="project" value="UniProtKB-SubCell"/>
</dbReference>
<dbReference type="GO" id="GO:0016020">
    <property type="term" value="C:membrane"/>
    <property type="evidence" value="ECO:0007669"/>
    <property type="project" value="UniProtKB-UniRule"/>
</dbReference>
<dbReference type="GO" id="GO:0019031">
    <property type="term" value="C:viral envelope"/>
    <property type="evidence" value="ECO:0007669"/>
    <property type="project" value="UniProtKB-UniRule"/>
</dbReference>
<dbReference type="GO" id="GO:0055036">
    <property type="term" value="C:virion membrane"/>
    <property type="evidence" value="ECO:0007669"/>
    <property type="project" value="UniProtKB-SubCell"/>
</dbReference>
<dbReference type="GO" id="GO:0039660">
    <property type="term" value="F:structural constituent of virion"/>
    <property type="evidence" value="ECO:0007669"/>
    <property type="project" value="UniProtKB-UniRule"/>
</dbReference>
<dbReference type="CDD" id="cd21564">
    <property type="entry name" value="alphaCoV_M"/>
    <property type="match status" value="1"/>
</dbReference>
<dbReference type="HAMAP" id="MF_04201">
    <property type="entry name" value="ALPHA_CORONA_M"/>
    <property type="match status" value="1"/>
</dbReference>
<dbReference type="InterPro" id="IPR042551">
    <property type="entry name" value="ALPHA_CORONA_M"/>
</dbReference>
<dbReference type="InterPro" id="IPR002574">
    <property type="entry name" value="M_CoV"/>
</dbReference>
<dbReference type="Pfam" id="PF01635">
    <property type="entry name" value="CoV_M"/>
    <property type="match status" value="1"/>
</dbReference>
<dbReference type="PROSITE" id="PS51927">
    <property type="entry name" value="COV_M"/>
    <property type="match status" value="1"/>
</dbReference>
<keyword id="KW-0325">Glycoprotein</keyword>
<keyword id="KW-1040">Host Golgi apparatus</keyword>
<keyword id="KW-1043">Host membrane</keyword>
<keyword id="KW-0472">Membrane</keyword>
<keyword id="KW-1185">Reference proteome</keyword>
<keyword id="KW-0812">Transmembrane</keyword>
<keyword id="KW-1133">Transmembrane helix</keyword>
<keyword id="KW-0261">Viral envelope protein</keyword>
<keyword id="KW-0468">Viral matrix protein</keyword>
<keyword id="KW-0946">Virion</keyword>
<accession>P04135</accession>
<organismHost>
    <name type="scientific">Sus scrofa</name>
    <name type="common">Pig</name>
    <dbReference type="NCBI Taxonomy" id="9823"/>
</organismHost>
<proteinExistence type="evidence at protein level"/>
<evidence type="ECO:0000255" key="1">
    <source>
        <dbReference type="HAMAP-Rule" id="MF_04201"/>
    </source>
</evidence>
<evidence type="ECO:0000255" key="2">
    <source>
        <dbReference type="PROSITE-ProRule" id="PRU01275"/>
    </source>
</evidence>
<evidence type="ECO:0000269" key="3">
    <source>
    </source>
</evidence>
<sequence length="262" mass="29569">MKILLILACVIACACGERYCAMKSDTDLSCRNSTASDCESCFNGGDLIWHLANWNFSWSIILIVFITVLQYGRPQFSWFVYGIKMLIMWLLWPVVLALTIFNAYSEYQVSRYVMFGFSIAGAIVTFVLWIMYFVRSIQLYRRTKSWWSFNPETKAILCVSALGRSYVLPLEGVPTGVTLTLLSGNLYAEGFKIAGGMNIDNLPKYVMVALPSRTIVYTLVGKKLKASSATGWAYYVKSKAGDYSTEARTDNLSEQEKLLHMV</sequence>
<gene>
    <name evidence="1" type="primary">M</name>
    <name type="ORF">5</name>
</gene>
<protein>
    <recommendedName>
        <fullName evidence="1">Membrane protein</fullName>
        <shortName evidence="1">M protein</shortName>
    </recommendedName>
    <alternativeName>
        <fullName evidence="1">E1 glycoprotein</fullName>
    </alternativeName>
    <alternativeName>
        <fullName evidence="1">Matrix glycoprotein</fullName>
    </alternativeName>
    <alternativeName>
        <fullName evidence="1">Membrane glycoprotein</fullName>
    </alternativeName>
</protein>
<name>VME1_CVPPU</name>
<organism>
    <name type="scientific">Porcine transmissible gastroenteritis coronavirus (strain Purdue)</name>
    <name type="common">TGEV</name>
    <dbReference type="NCBI Taxonomy" id="11151"/>
    <lineage>
        <taxon>Viruses</taxon>
        <taxon>Riboviria</taxon>
        <taxon>Orthornavirae</taxon>
        <taxon>Pisuviricota</taxon>
        <taxon>Pisoniviricetes</taxon>
        <taxon>Nidovirales</taxon>
        <taxon>Cornidovirineae</taxon>
        <taxon>Coronaviridae</taxon>
        <taxon>Orthocoronavirinae</taxon>
        <taxon>Alphacoronavirus</taxon>
        <taxon>Tegacovirus</taxon>
        <taxon>Alphacoronavirus 1</taxon>
    </lineage>
</organism>
<feature type="chain" id="PRO_0000037155" description="Membrane protein">
    <location>
        <begin position="1"/>
        <end position="262"/>
    </location>
</feature>
<feature type="topological domain" description="Virion surface" evidence="1">
    <location>
        <begin position="18"/>
        <end position="47"/>
    </location>
</feature>
<feature type="transmembrane region" description="Helical" evidence="1">
    <location>
        <begin position="48"/>
        <end position="68"/>
    </location>
</feature>
<feature type="topological domain" description="Intravirion" evidence="1">
    <location>
        <begin position="69"/>
        <end position="77"/>
    </location>
</feature>
<feature type="transmembrane region" description="Helical" evidence="1">
    <location>
        <begin position="78"/>
        <end position="98"/>
    </location>
</feature>
<feature type="topological domain" description="Virion surface" evidence="1">
    <location>
        <begin position="99"/>
        <end position="112"/>
    </location>
</feature>
<feature type="transmembrane region" description="Helical" evidence="1">
    <location>
        <begin position="113"/>
        <end position="133"/>
    </location>
</feature>
<feature type="topological domain" description="Intravirion" evidence="1">
    <location>
        <begin position="134"/>
        <end position="262"/>
    </location>
</feature>
<feature type="region of interest" description="Interaction with N protein" evidence="1">
    <location>
        <begin position="237"/>
        <end position="252"/>
    </location>
</feature>
<feature type="glycosylation site" description="N-linked (GlcNAc...) asparagine; by host">
    <location>
        <position position="32"/>
    </location>
</feature>
<feature type="mutagenesis site" description="In DM49-3; reduces production of alpha-interferon by the host organism.">
    <original>S</original>
    <variation>I</variation>
    <location>
        <position position="33"/>
    </location>
</feature>
<feature type="mutagenesis site" description="In DM25-3/49-12; does not affect production of alpha-interferon by the host organism.">
    <original>S</original>
    <variation>R</variation>
    <location>
        <position position="33"/>
    </location>
</feature>
<feature type="mutagenesis site" description="In DM49-4; abolishes production of alpha-interferon by the host organism.">
    <original>T</original>
    <variation>I</variation>
    <location>
        <position position="34"/>
    </location>
</feature>
<feature type="sequence conflict" description="In Ref. 1; AAA47912." ref="1">
    <original>V</original>
    <variation>A</variation>
    <location>
        <position position="80"/>
    </location>
</feature>
<feature type="sequence conflict" description="In Ref. 2; CAA29091." ref="2">
    <original>K</original>
    <variation>N</variation>
    <location>
        <position position="144"/>
    </location>
</feature>
<feature type="sequence conflict" description="In Ref. 2 and 3." ref="2 3">
    <original>G</original>
    <variation>D</variation>
    <location>
        <position position="195"/>
    </location>
</feature>
<feature type="sequence conflict" description="In Ref. 3." ref="3">
    <original>M</original>
    <variation>V</variation>
    <location>
        <position position="197"/>
    </location>
</feature>
<reference key="1">
    <citation type="journal article" date="1988" name="Virology">
        <title>The amino-terminal signal peptide on the porcine transmissible gastroenteritis coronavirus matrix protein is not an absolute requirement for membrane translocation and glycosylation.</title>
        <authorList>
            <person name="Kapke P.A."/>
            <person name="Tung F.Y.T."/>
            <person name="Hogue B.G."/>
            <person name="Brian D.A."/>
            <person name="Woods R.D."/>
            <person name="Wesley R."/>
        </authorList>
    </citation>
    <scope>NUCLEOTIDE SEQUENCE [GENOMIC RNA]</scope>
</reference>
<reference key="2">
    <citation type="journal article" date="1987" name="J. Gen. Virol.">
        <title>Sequence and N-terminal processing of the transmembrane protein E1 of the coronavirus transmissible gastroenteritis virus.</title>
        <authorList>
            <person name="Laude H."/>
            <person name="Rasschaert D."/>
            <person name="Huet J.-C."/>
        </authorList>
    </citation>
    <scope>NUCLEOTIDE SEQUENCE [GENOMIC RNA]</scope>
</reference>
<reference key="3">
    <citation type="journal article" date="1987" name="Biochimie">
        <title>Enteric coronavirus TGEV: partial sequence of the genomic RNA, its organization and expression.</title>
        <authorList>
            <person name="Rasschaert D."/>
            <person name="Gelfi J."/>
            <person name="Laude H."/>
        </authorList>
    </citation>
    <scope>NUCLEOTIDE SEQUENCE [GENOMIC RNA]</scope>
</reference>
<reference key="4">
    <citation type="journal article" date="2000" name="Proc. Natl. Acad. Sci. U.S.A.">
        <title>Engineering the largest RNA virus genome as an infectious bacterial artificial chromosome.</title>
        <authorList>
            <person name="Almazan F."/>
            <person name="Gonzalez J.M."/>
            <person name="Penzes Z."/>
            <person name="Izeta A."/>
            <person name="Calvo E."/>
            <person name="Plana-Duran J."/>
            <person name="Enjuanes L."/>
        </authorList>
    </citation>
    <scope>NUCLEOTIDE SEQUENCE [GENOMIC RNA]</scope>
    <source>
        <strain>Isolate PUR46-MAD</strain>
    </source>
</reference>
<reference key="5">
    <citation type="journal article" date="1986" name="Virology">
        <title>Sequence analysis of the porcine transmissible gastroenteritis coronavirus nucleocapsid protein gene.</title>
        <authorList>
            <person name="Kapke P.A."/>
            <person name="Brian D.A."/>
        </authorList>
    </citation>
    <scope>NUCLEOTIDE SEQUENCE [GENOMIC RNA] OF 157-262</scope>
</reference>
<reference key="6">
    <citation type="journal article" date="2001" name="J. Virol.">
        <title>The membrane M protein carboxy terminus binds to transmissible gastroenteritis coronavirus core and contributes to core stability.</title>
        <authorList>
            <person name="Escors D."/>
            <person name="Ortego J."/>
            <person name="Laude H."/>
            <person name="Enjuanes L."/>
        </authorList>
    </citation>
    <scope>FUNCTION</scope>
    <scope>INTERACTION WITH N PROTEIN</scope>
</reference>
<reference key="7">
    <citation type="journal article" date="1992" name="J. Virol.">
        <title>Single amino acid changes in the viral glycoprotein M affect induction of alpha interferon by the coronavirus transmissible gastroenteritis virus.</title>
        <authorList>
            <person name="Laude H."/>
            <person name="Gelfi J."/>
            <person name="Lavenant L."/>
            <person name="Charley B."/>
        </authorList>
    </citation>
    <scope>MUTANTS DM49-4; H92 AND DM25-9/49-12</scope>
</reference>
<reference key="8">
    <citation type="journal article" date="1995" name="J. Virol.">
        <title>Membrane protein molecules of transmissible gastroenteritis coronavirus also expose the carboxy-terminal region on the external surface of the virion.</title>
        <authorList>
            <person name="Risco C."/>
            <person name="Anton I.M."/>
            <person name="Sune C."/>
            <person name="Pedregosa A.M."/>
            <person name="Martin-Alonso J.M."/>
            <person name="Parra F."/>
            <person name="Carrascosa J.L."/>
            <person name="Enjuanes L."/>
        </authorList>
    </citation>
    <scope>TOPOLOGY</scope>
    <source>
        <strain>Isolate PUR46-MAD</strain>
    </source>
</reference>
<comment type="function">
    <text evidence="1 2 3">Component of the viral envelope that plays a central role in virus morphogenesis and assembly via its interactions with other viral proteins.</text>
</comment>
<comment type="subunit">
    <text evidence="1 2">Homomultimer. Interacts with envelope E protein in the budding compartment of the host cell, which is located between endoplasmic reticulum and the Golgi complex. Forms a complex with HE and S proteins. Interacts with nucleocapsid N protein. This interaction probably participates in RNA packaging into the virus.</text>
</comment>
<comment type="interaction">
    <interactant intactId="EBI-25568430">
        <id>P04135</id>
    </interactant>
    <interactant intactId="EBI-25568629">
        <id>A6M930</id>
        <label>EIF4A2</label>
    </interactant>
    <organismsDiffer>true</organismsDiffer>
    <experiments>4</experiments>
</comment>
<comment type="subcellular location">
    <subcellularLocation>
        <location evidence="1">Virion membrane</location>
        <topology evidence="1">Multi-pass membrane protein</topology>
    </subcellularLocation>
    <subcellularLocation>
        <location evidence="1">Host Golgi apparatus membrane</location>
        <topology evidence="1">Multi-pass membrane protein</topology>
    </subcellularLocation>
    <text evidence="1">Largely embedded in the lipid bilayer.</text>
</comment>
<comment type="similarity">
    <text evidence="1">Belongs to the alphacoronaviruses M protein family.</text>
</comment>
<comment type="caution">
    <text>The C-terminus of some M molecules seems to be exposed on the external surface of the virion.</text>
</comment>
<comment type="sequence caution">
    <conflict type="erroneous initiation">
        <sequence resource="EMBL-CDS" id="AAA47912"/>
    </conflict>
</comment>